<keyword id="KW-0965">Cell junction</keyword>
<keyword id="KW-1003">Cell membrane</keyword>
<keyword id="KW-0966">Cell projection</keyword>
<keyword id="KW-0333">Golgi apparatus</keyword>
<keyword id="KW-0342">GTP-binding</keyword>
<keyword id="KW-1017">Isopeptide bond</keyword>
<keyword id="KW-0449">Lipoprotein</keyword>
<keyword id="KW-0460">Magnesium</keyword>
<keyword id="KW-0472">Membrane</keyword>
<keyword id="KW-0479">Metal-binding</keyword>
<keyword id="KW-0547">Nucleotide-binding</keyword>
<keyword id="KW-0564">Palmitate</keyword>
<keyword id="KW-0597">Phosphoprotein</keyword>
<keyword id="KW-1185">Reference proteome</keyword>
<keyword id="KW-0832">Ubl conjugation</keyword>
<name>RHOU_MOUSE</name>
<sequence>MAPQQGRPALPARCEPPAAPPVPPRRERGGRGARGPGVSGGRGRAGGAEGRGVKCVLVGDGAVGKTSLVVSYTTNGYPTEYIPTAFDNFSAVVSVDGRPVRLQLCDTAGQDEFDKLRPLCYTNTDIFLLCFSVVSPTSFQNVGEKWVPEIRRHCPKAPIILVGTQSDLREDVKVLIELDKCKEKPVPEEAAKLCAEEVKAVSYIECSALTQKNLKEVFDAAIVAGIQHSDSQLQPKKSKSRTPDKVRDLSKSWWRKYCCLA</sequence>
<organism>
    <name type="scientific">Mus musculus</name>
    <name type="common">Mouse</name>
    <dbReference type="NCBI Taxonomy" id="10090"/>
    <lineage>
        <taxon>Eukaryota</taxon>
        <taxon>Metazoa</taxon>
        <taxon>Chordata</taxon>
        <taxon>Craniata</taxon>
        <taxon>Vertebrata</taxon>
        <taxon>Euteleostomi</taxon>
        <taxon>Mammalia</taxon>
        <taxon>Eutheria</taxon>
        <taxon>Euarchontoglires</taxon>
        <taxon>Glires</taxon>
        <taxon>Rodentia</taxon>
        <taxon>Myomorpha</taxon>
        <taxon>Muroidea</taxon>
        <taxon>Muridae</taxon>
        <taxon>Murinae</taxon>
        <taxon>Mus</taxon>
        <taxon>Mus</taxon>
    </lineage>
</organism>
<accession>Q9EQT3</accession>
<gene>
    <name evidence="7" type="primary">Rhou</name>
    <name evidence="7" type="synonym">Arhu</name>
    <name type="synonym">G28k</name>
    <name evidence="5" type="synonym">Wrch1</name>
</gene>
<reference evidence="5" key="1">
    <citation type="journal article" date="2001" name="Genes Dev.">
        <title>Wrch-1, a novel member of the Rho gene family that is regulated by Wnt-1.</title>
        <authorList>
            <person name="Tao W."/>
            <person name="Pennica D."/>
            <person name="Xu L."/>
            <person name="Kalejta R.F."/>
            <person name="Levine A.J."/>
        </authorList>
    </citation>
    <scope>NUCLEOTIDE SEQUENCE [MRNA]</scope>
</reference>
<reference evidence="6" key="2">
    <citation type="journal article" date="2004" name="J. Gastroenterol. Hepatol.">
        <title>Novel human, mouse and Xenopus genes encoding a member of the RAS superfamily of low-molecular-weight GTP-binding proteins and its downregulation in W/WV mouse jejunum.</title>
        <authorList>
            <person name="Daigo Y."/>
            <person name="Takayama I."/>
            <person name="Ponder B.A.J."/>
            <person name="Caldas C."/>
            <person name="Ward S.M."/>
            <person name="Sanders K.M."/>
            <person name="Fujino M.A."/>
        </authorList>
    </citation>
    <scope>NUCLEOTIDE SEQUENCE [MRNA]</scope>
</reference>
<protein>
    <recommendedName>
        <fullName>Rho-related GTP-binding protein RhoU</fullName>
    </recommendedName>
    <alternativeName>
        <fullName>Rho GTPase-like protein ARHU</fullName>
    </alternativeName>
    <alternativeName>
        <fullName>Wnt-1 responsive Cdc42 homolog 1</fullName>
        <shortName>WRCH-1</shortName>
    </alternativeName>
</protein>
<comment type="function">
    <text evidence="3">Binds to and activates protein kinase PAK1. Plays a role in the regulation of cell morphology, cytoskeletal organization and focal adhesion assembly during cell migration. Also stimulates quiescent cells to reenter the cell cycle. Has no detectable GTPase activity but its high intrinsic guanine nucleotide exchange activity suggests it is constitutively GTP-bound.</text>
</comment>
<comment type="cofactor">
    <cofactor evidence="3">
        <name>Mg(2+)</name>
        <dbReference type="ChEBI" id="CHEBI:18420"/>
    </cofactor>
</comment>
<comment type="subunit">
    <text evidence="3">Interacts with PAK1. Interacts with PAK3. Interacts with ARHGAP30 in a GTP-independent manner. In its GTP-loaded conformation, interacts with ARHGAP31. Interacts with PTK2B/PYK2. Interacts with PAK4; interaction protects RHOU from ubiquitination and subsequent degradation.</text>
</comment>
<comment type="subcellular location">
    <subcellularLocation>
        <location evidence="3">Cell membrane</location>
        <topology evidence="3">Lipid-anchor</topology>
        <orientation evidence="3">Cytoplasmic side</orientation>
    </subcellularLocation>
    <subcellularLocation>
        <location evidence="3">Golgi apparatus membrane</location>
        <topology evidence="3">Lipid-anchor</topology>
    </subcellularLocation>
    <subcellularLocation>
        <location evidence="3">Cell junction</location>
        <location evidence="3">Focal adhesion</location>
    </subcellularLocation>
    <subcellularLocation>
        <location evidence="3">Cell projection</location>
        <location evidence="3">Podosome</location>
    </subcellularLocation>
    <text evidence="3">Localizes to podosomes in SRC-transformed cells.</text>
</comment>
<comment type="PTM">
    <text evidence="1">Tyrosine phosphorylated by SRC in response to PTK2B/PYK2 activation.</text>
</comment>
<comment type="PTM">
    <text evidence="3">Ubiquitinated. 'Lys-48'-linked ubiquitination at Lys-180 and Lys-251 by the ECS(RAB40A) complex leading to its degradation.</text>
</comment>
<comment type="similarity">
    <text evidence="3">Belongs to the small GTPase superfamily. Rho family.</text>
</comment>
<dbReference type="EMBL" id="AF378088">
    <property type="protein sequence ID" value="AAK83341.1"/>
    <property type="molecule type" value="mRNA"/>
</dbReference>
<dbReference type="EMBL" id="AB051827">
    <property type="protein sequence ID" value="BAB18639.1"/>
    <property type="molecule type" value="mRNA"/>
</dbReference>
<dbReference type="CCDS" id="CCDS22762.1"/>
<dbReference type="RefSeq" id="NP_598716.1">
    <property type="nucleotide sequence ID" value="NM_133955.5"/>
</dbReference>
<dbReference type="SMR" id="Q9EQT3"/>
<dbReference type="FunCoup" id="Q9EQT3">
    <property type="interactions" value="277"/>
</dbReference>
<dbReference type="STRING" id="10090.ENSMUSP00000038915"/>
<dbReference type="iPTMnet" id="Q9EQT3"/>
<dbReference type="PhosphoSitePlus" id="Q9EQT3"/>
<dbReference type="SwissPalm" id="Q9EQT3"/>
<dbReference type="PaxDb" id="10090-ENSMUSP00000038915"/>
<dbReference type="ProteomicsDB" id="253236"/>
<dbReference type="Pumba" id="Q9EQT3"/>
<dbReference type="Antibodypedia" id="34671">
    <property type="antibodies" value="155 antibodies from 25 providers"/>
</dbReference>
<dbReference type="DNASU" id="69581"/>
<dbReference type="Ensembl" id="ENSMUST00000045487.4">
    <property type="protein sequence ID" value="ENSMUSP00000038915.4"/>
    <property type="gene ID" value="ENSMUSG00000039960.6"/>
</dbReference>
<dbReference type="GeneID" id="69581"/>
<dbReference type="KEGG" id="mmu:69581"/>
<dbReference type="UCSC" id="uc009nwm.1">
    <property type="organism name" value="mouse"/>
</dbReference>
<dbReference type="AGR" id="MGI:1916831"/>
<dbReference type="CTD" id="58480"/>
<dbReference type="MGI" id="MGI:1916831">
    <property type="gene designation" value="Rhou"/>
</dbReference>
<dbReference type="VEuPathDB" id="HostDB:ENSMUSG00000039960"/>
<dbReference type="eggNOG" id="KOG0393">
    <property type="taxonomic scope" value="Eukaryota"/>
</dbReference>
<dbReference type="GeneTree" id="ENSGT00940000156644"/>
<dbReference type="HOGENOM" id="CLU_041217_21_7_1"/>
<dbReference type="InParanoid" id="Q9EQT3"/>
<dbReference type="OMA" id="WVLEIRR"/>
<dbReference type="OrthoDB" id="8830751at2759"/>
<dbReference type="PhylomeDB" id="Q9EQT3"/>
<dbReference type="TreeFam" id="TF321839"/>
<dbReference type="Reactome" id="R-MMU-9013420">
    <property type="pathway name" value="RHOU GTPase cycle"/>
</dbReference>
<dbReference type="BioGRID-ORCS" id="69581">
    <property type="hits" value="0 hits in 76 CRISPR screens"/>
</dbReference>
<dbReference type="ChiTaRS" id="Rhou">
    <property type="organism name" value="mouse"/>
</dbReference>
<dbReference type="PRO" id="PR:Q9EQT3"/>
<dbReference type="Proteomes" id="UP000000589">
    <property type="component" value="Chromosome 8"/>
</dbReference>
<dbReference type="RNAct" id="Q9EQT3">
    <property type="molecule type" value="protein"/>
</dbReference>
<dbReference type="Bgee" id="ENSMUSG00000039960">
    <property type="expression patterns" value="Expressed in vestibular membrane of cochlear duct and 264 other cell types or tissues"/>
</dbReference>
<dbReference type="GO" id="GO:0042995">
    <property type="term" value="C:cell projection"/>
    <property type="evidence" value="ECO:0007669"/>
    <property type="project" value="UniProtKB-KW"/>
</dbReference>
<dbReference type="GO" id="GO:0005925">
    <property type="term" value="C:focal adhesion"/>
    <property type="evidence" value="ECO:0007669"/>
    <property type="project" value="UniProtKB-SubCell"/>
</dbReference>
<dbReference type="GO" id="GO:0000139">
    <property type="term" value="C:Golgi membrane"/>
    <property type="evidence" value="ECO:0007669"/>
    <property type="project" value="UniProtKB-SubCell"/>
</dbReference>
<dbReference type="GO" id="GO:0005886">
    <property type="term" value="C:plasma membrane"/>
    <property type="evidence" value="ECO:0007669"/>
    <property type="project" value="UniProtKB-SubCell"/>
</dbReference>
<dbReference type="GO" id="GO:0002102">
    <property type="term" value="C:podosome"/>
    <property type="evidence" value="ECO:0007669"/>
    <property type="project" value="UniProtKB-SubCell"/>
</dbReference>
<dbReference type="GO" id="GO:0005525">
    <property type="term" value="F:GTP binding"/>
    <property type="evidence" value="ECO:0007669"/>
    <property type="project" value="UniProtKB-KW"/>
</dbReference>
<dbReference type="GO" id="GO:0003924">
    <property type="term" value="F:GTPase activity"/>
    <property type="evidence" value="ECO:0000315"/>
    <property type="project" value="MGI"/>
</dbReference>
<dbReference type="GO" id="GO:0046872">
    <property type="term" value="F:metal ion binding"/>
    <property type="evidence" value="ECO:0007669"/>
    <property type="project" value="UniProtKB-KW"/>
</dbReference>
<dbReference type="GO" id="GO:0030036">
    <property type="term" value="P:actin cytoskeleton organization"/>
    <property type="evidence" value="ECO:0000314"/>
    <property type="project" value="MGI"/>
</dbReference>
<dbReference type="GO" id="GO:0007010">
    <property type="term" value="P:cytoskeleton organization"/>
    <property type="evidence" value="ECO:0000250"/>
    <property type="project" value="UniProtKB"/>
</dbReference>
<dbReference type="GO" id="GO:0000082">
    <property type="term" value="P:G1/S transition of mitotic cell cycle"/>
    <property type="evidence" value="ECO:0000314"/>
    <property type="project" value="MGI"/>
</dbReference>
<dbReference type="GO" id="GO:0016601">
    <property type="term" value="P:Rac protein signal transduction"/>
    <property type="evidence" value="ECO:0000314"/>
    <property type="project" value="MGI"/>
</dbReference>
<dbReference type="GO" id="GO:0008360">
    <property type="term" value="P:regulation of cell shape"/>
    <property type="evidence" value="ECO:0000314"/>
    <property type="project" value="MGI"/>
</dbReference>
<dbReference type="CDD" id="cd04130">
    <property type="entry name" value="Wrch_1"/>
    <property type="match status" value="1"/>
</dbReference>
<dbReference type="FunFam" id="3.40.50.300:FF:000561">
    <property type="entry name" value="rho-related GTP-binding protein RhoV"/>
    <property type="match status" value="1"/>
</dbReference>
<dbReference type="Gene3D" id="3.40.50.300">
    <property type="entry name" value="P-loop containing nucleotide triphosphate hydrolases"/>
    <property type="match status" value="1"/>
</dbReference>
<dbReference type="InterPro" id="IPR027417">
    <property type="entry name" value="P-loop_NTPase"/>
</dbReference>
<dbReference type="InterPro" id="IPR005225">
    <property type="entry name" value="Small_GTP-bd"/>
</dbReference>
<dbReference type="InterPro" id="IPR001806">
    <property type="entry name" value="Small_GTPase"/>
</dbReference>
<dbReference type="InterPro" id="IPR003578">
    <property type="entry name" value="Small_GTPase_Rho"/>
</dbReference>
<dbReference type="NCBIfam" id="TIGR00231">
    <property type="entry name" value="small_GTP"/>
    <property type="match status" value="1"/>
</dbReference>
<dbReference type="PANTHER" id="PTHR24072">
    <property type="entry name" value="RHO FAMILY GTPASE"/>
    <property type="match status" value="1"/>
</dbReference>
<dbReference type="Pfam" id="PF00071">
    <property type="entry name" value="Ras"/>
    <property type="match status" value="1"/>
</dbReference>
<dbReference type="PRINTS" id="PR00449">
    <property type="entry name" value="RASTRNSFRMNG"/>
</dbReference>
<dbReference type="SMART" id="SM00175">
    <property type="entry name" value="RAB"/>
    <property type="match status" value="1"/>
</dbReference>
<dbReference type="SMART" id="SM00176">
    <property type="entry name" value="RAN"/>
    <property type="match status" value="1"/>
</dbReference>
<dbReference type="SMART" id="SM00173">
    <property type="entry name" value="RAS"/>
    <property type="match status" value="1"/>
</dbReference>
<dbReference type="SMART" id="SM00174">
    <property type="entry name" value="RHO"/>
    <property type="match status" value="1"/>
</dbReference>
<dbReference type="SUPFAM" id="SSF52540">
    <property type="entry name" value="P-loop containing nucleoside triphosphate hydrolases"/>
    <property type="match status" value="1"/>
</dbReference>
<dbReference type="PROSITE" id="PS51420">
    <property type="entry name" value="RHO"/>
    <property type="match status" value="1"/>
</dbReference>
<feature type="chain" id="PRO_0000326436" description="Rho-related GTP-binding protein RhoU">
    <location>
        <begin position="1"/>
        <end position="261"/>
    </location>
</feature>
<feature type="region of interest" description="Disordered" evidence="4">
    <location>
        <begin position="1"/>
        <end position="48"/>
    </location>
</feature>
<feature type="compositionally biased region" description="Low complexity" evidence="4">
    <location>
        <begin position="7"/>
        <end position="16"/>
    </location>
</feature>
<feature type="compositionally biased region" description="Gly residues" evidence="4">
    <location>
        <begin position="32"/>
        <end position="48"/>
    </location>
</feature>
<feature type="binding site" evidence="3">
    <location>
        <begin position="59"/>
        <end position="66"/>
    </location>
    <ligand>
        <name>GTP</name>
        <dbReference type="ChEBI" id="CHEBI:37565"/>
    </ligand>
</feature>
<feature type="binding site" evidence="3">
    <location>
        <begin position="106"/>
        <end position="110"/>
    </location>
    <ligand>
        <name>GTP</name>
        <dbReference type="ChEBI" id="CHEBI:37565"/>
    </ligand>
</feature>
<feature type="binding site" evidence="2">
    <location>
        <begin position="164"/>
        <end position="167"/>
    </location>
    <ligand>
        <name>GTP</name>
        <dbReference type="ChEBI" id="CHEBI:37565"/>
    </ligand>
</feature>
<feature type="lipid moiety-binding region" description="S-palmitoyl cysteine" evidence="3">
    <location>
        <position position="259"/>
    </location>
</feature>
<feature type="cross-link" description="Glycyl lysine isopeptide (Lys-Gly) (interchain with G-Cter in ubiquitin)" evidence="3">
    <location>
        <position position="180"/>
    </location>
</feature>
<feature type="cross-link" description="Glycyl lysine isopeptide (Lys-Gly) (interchain with G-Cter in ubiquitin)" evidence="3">
    <location>
        <position position="251"/>
    </location>
</feature>
<evidence type="ECO:0000250" key="1"/>
<evidence type="ECO:0000250" key="2">
    <source>
        <dbReference type="UniProtKB" id="P61586"/>
    </source>
</evidence>
<evidence type="ECO:0000250" key="3">
    <source>
        <dbReference type="UniProtKB" id="Q7L0Q8"/>
    </source>
</evidence>
<evidence type="ECO:0000256" key="4">
    <source>
        <dbReference type="SAM" id="MobiDB-lite"/>
    </source>
</evidence>
<evidence type="ECO:0000312" key="5">
    <source>
        <dbReference type="EMBL" id="AAK83341.1"/>
    </source>
</evidence>
<evidence type="ECO:0000312" key="6">
    <source>
        <dbReference type="EMBL" id="BAB18639.1"/>
    </source>
</evidence>
<evidence type="ECO:0000312" key="7">
    <source>
        <dbReference type="MGI" id="MGI:1916831"/>
    </source>
</evidence>
<proteinExistence type="evidence at transcript level"/>